<feature type="chain" id="PRO_0000195148" description="Dynein light chain 1, cytoplasmic">
    <location>
        <begin position="1"/>
        <end position="85"/>
    </location>
</feature>
<proteinExistence type="inferred from homology"/>
<organism>
    <name type="scientific">Schizosaccharomyces pombe (strain 972 / ATCC 24843)</name>
    <name type="common">Fission yeast</name>
    <dbReference type="NCBI Taxonomy" id="284812"/>
    <lineage>
        <taxon>Eukaryota</taxon>
        <taxon>Fungi</taxon>
        <taxon>Dikarya</taxon>
        <taxon>Ascomycota</taxon>
        <taxon>Taphrinomycotina</taxon>
        <taxon>Schizosaccharomycetes</taxon>
        <taxon>Schizosaccharomycetales</taxon>
        <taxon>Schizosaccharomycetaceae</taxon>
        <taxon>Schizosaccharomyces</taxon>
    </lineage>
</organism>
<reference key="1">
    <citation type="journal article" date="2002" name="Mol. Biol. Cell">
        <title>The 14-kDa dynein light chain-family protein Dlc1 is required for regular oscillatory nuclear movement and efficient recombination during meiotic prophase in fission yeast.</title>
        <authorList>
            <person name="Miki F."/>
            <person name="Okazaki K."/>
            <person name="Shimanuki M."/>
            <person name="Yamamoto A."/>
            <person name="Hiraoka Y."/>
            <person name="Niwa O."/>
        </authorList>
    </citation>
    <scope>NUCLEOTIDE SEQUENCE [MRNA]</scope>
    <source>
        <strain>972 / ATCC 24843</strain>
    </source>
</reference>
<reference key="2">
    <citation type="journal article" date="2002" name="Nature">
        <title>The genome sequence of Schizosaccharomyces pombe.</title>
        <authorList>
            <person name="Wood V."/>
            <person name="Gwilliam R."/>
            <person name="Rajandream M.A."/>
            <person name="Lyne M.H."/>
            <person name="Lyne R."/>
            <person name="Stewart A."/>
            <person name="Sgouros J.G."/>
            <person name="Peat N."/>
            <person name="Hayles J."/>
            <person name="Baker S.G."/>
            <person name="Basham D."/>
            <person name="Bowman S."/>
            <person name="Brooks K."/>
            <person name="Brown D."/>
            <person name="Brown S."/>
            <person name="Chillingworth T."/>
            <person name="Churcher C.M."/>
            <person name="Collins M."/>
            <person name="Connor R."/>
            <person name="Cronin A."/>
            <person name="Davis P."/>
            <person name="Feltwell T."/>
            <person name="Fraser A."/>
            <person name="Gentles S."/>
            <person name="Goble A."/>
            <person name="Hamlin N."/>
            <person name="Harris D.E."/>
            <person name="Hidalgo J."/>
            <person name="Hodgson G."/>
            <person name="Holroyd S."/>
            <person name="Hornsby T."/>
            <person name="Howarth S."/>
            <person name="Huckle E.J."/>
            <person name="Hunt S."/>
            <person name="Jagels K."/>
            <person name="James K.D."/>
            <person name="Jones L."/>
            <person name="Jones M."/>
            <person name="Leather S."/>
            <person name="McDonald S."/>
            <person name="McLean J."/>
            <person name="Mooney P."/>
            <person name="Moule S."/>
            <person name="Mungall K.L."/>
            <person name="Murphy L.D."/>
            <person name="Niblett D."/>
            <person name="Odell C."/>
            <person name="Oliver K."/>
            <person name="O'Neil S."/>
            <person name="Pearson D."/>
            <person name="Quail M.A."/>
            <person name="Rabbinowitsch E."/>
            <person name="Rutherford K.M."/>
            <person name="Rutter S."/>
            <person name="Saunders D."/>
            <person name="Seeger K."/>
            <person name="Sharp S."/>
            <person name="Skelton J."/>
            <person name="Simmonds M.N."/>
            <person name="Squares R."/>
            <person name="Squares S."/>
            <person name="Stevens K."/>
            <person name="Taylor K."/>
            <person name="Taylor R.G."/>
            <person name="Tivey A."/>
            <person name="Walsh S.V."/>
            <person name="Warren T."/>
            <person name="Whitehead S."/>
            <person name="Woodward J.R."/>
            <person name="Volckaert G."/>
            <person name="Aert R."/>
            <person name="Robben J."/>
            <person name="Grymonprez B."/>
            <person name="Weltjens I."/>
            <person name="Vanstreels E."/>
            <person name="Rieger M."/>
            <person name="Schaefer M."/>
            <person name="Mueller-Auer S."/>
            <person name="Gabel C."/>
            <person name="Fuchs M."/>
            <person name="Duesterhoeft A."/>
            <person name="Fritzc C."/>
            <person name="Holzer E."/>
            <person name="Moestl D."/>
            <person name="Hilbert H."/>
            <person name="Borzym K."/>
            <person name="Langer I."/>
            <person name="Beck A."/>
            <person name="Lehrach H."/>
            <person name="Reinhardt R."/>
            <person name="Pohl T.M."/>
            <person name="Eger P."/>
            <person name="Zimmermann W."/>
            <person name="Wedler H."/>
            <person name="Wambutt R."/>
            <person name="Purnelle B."/>
            <person name="Goffeau A."/>
            <person name="Cadieu E."/>
            <person name="Dreano S."/>
            <person name="Gloux S."/>
            <person name="Lelaure V."/>
            <person name="Mottier S."/>
            <person name="Galibert F."/>
            <person name="Aves S.J."/>
            <person name="Xiang Z."/>
            <person name="Hunt C."/>
            <person name="Moore K."/>
            <person name="Hurst S.M."/>
            <person name="Lucas M."/>
            <person name="Rochet M."/>
            <person name="Gaillardin C."/>
            <person name="Tallada V.A."/>
            <person name="Garzon A."/>
            <person name="Thode G."/>
            <person name="Daga R.R."/>
            <person name="Cruzado L."/>
            <person name="Jimenez J."/>
            <person name="Sanchez M."/>
            <person name="del Rey F."/>
            <person name="Benito J."/>
            <person name="Dominguez A."/>
            <person name="Revuelta J.L."/>
            <person name="Moreno S."/>
            <person name="Armstrong J."/>
            <person name="Forsburg S.L."/>
            <person name="Cerutti L."/>
            <person name="Lowe T."/>
            <person name="McCombie W.R."/>
            <person name="Paulsen I."/>
            <person name="Potashkin J."/>
            <person name="Shpakovski G.V."/>
            <person name="Ussery D."/>
            <person name="Barrell B.G."/>
            <person name="Nurse P."/>
        </authorList>
    </citation>
    <scope>NUCLEOTIDE SEQUENCE [LARGE SCALE GENOMIC DNA]</scope>
    <source>
        <strain>972 / ATCC 24843</strain>
    </source>
</reference>
<protein>
    <recommendedName>
        <fullName>Dynein light chain 1, cytoplasmic</fullName>
    </recommendedName>
</protein>
<comment type="function">
    <text evidence="1 2">Acts as one of several non-catalytic accessory components of the cytoplasmic dynein complex that are thought to be involved in linking dynein to cargos and to adapter proteins that regulate dynein function. Cytoplasmic dynein 1 acts as a motor for the intracellular retrograde motility of vesicles and organelles along microtubules. May play a role in changing or maintaining the spatial distribution of cytoskeletal structures (By similarity). Also a component of the nuclear pore complex (By similarity).</text>
</comment>
<comment type="subunit">
    <text evidence="2">Homodimer. Cytoplasmic dynein consists of two catalytic heavy chains (HCs) and a number of non-catalytic subunits which present intermediate chains (ICs), light intermediate chains (LICs) and light chains (LCs). Component of the nuclear pore complex (NPC). NPC constitutes the exclusive means of nucleocytoplasmic transport. NPCs allow the passive diffusion of ions and small molecules and the active, nuclear transport receptor-mediated bidirectional transport of macromolecules such as proteins, RNAs, ribonucleoparticles (RNPs), and ribosomal subunits across the nuclear envelope. Due to its 8-fold rotational symmetry, all subunits are present with 8 copies or multiples thereof.</text>
</comment>
<comment type="subcellular location">
    <subcellularLocation>
        <location evidence="2">Cytoplasm</location>
        <location evidence="2">Cytoskeleton</location>
    </subcellularLocation>
    <subcellularLocation>
        <location evidence="2">Nucleus</location>
        <location evidence="2">Nuclear pore complex</location>
    </subcellularLocation>
</comment>
<comment type="similarity">
    <text evidence="3">Belongs to the dynein light chain family.</text>
</comment>
<keyword id="KW-0963">Cytoplasm</keyword>
<keyword id="KW-0206">Cytoskeleton</keyword>
<keyword id="KW-0243">Dynein</keyword>
<keyword id="KW-0493">Microtubule</keyword>
<keyword id="KW-0505">Motor protein</keyword>
<keyword id="KW-0509">mRNA transport</keyword>
<keyword id="KW-0906">Nuclear pore complex</keyword>
<keyword id="KW-0539">Nucleus</keyword>
<keyword id="KW-0653">Protein transport</keyword>
<keyword id="KW-1185">Reference proteome</keyword>
<keyword id="KW-0811">Translocation</keyword>
<keyword id="KW-0813">Transport</keyword>
<name>DYL1_SCHPO</name>
<dbReference type="EMBL" id="AF197476">
    <property type="protein sequence ID" value="AAF05842.1"/>
    <property type="molecule type" value="mRNA"/>
</dbReference>
<dbReference type="EMBL" id="CU329670">
    <property type="protein sequence ID" value="CAB54155.1"/>
    <property type="molecule type" value="Genomic_DNA"/>
</dbReference>
<dbReference type="PIR" id="T39205">
    <property type="entry name" value="T39205"/>
</dbReference>
<dbReference type="RefSeq" id="NP_594368.1">
    <property type="nucleotide sequence ID" value="NM_001019789.2"/>
</dbReference>
<dbReference type="SMR" id="Q9UR05"/>
<dbReference type="BioGRID" id="279948">
    <property type="interactions" value="14"/>
</dbReference>
<dbReference type="FunCoup" id="Q9UR05">
    <property type="interactions" value="168"/>
</dbReference>
<dbReference type="STRING" id="284812.Q9UR05"/>
<dbReference type="PaxDb" id="4896-SPAC926.07c.1"/>
<dbReference type="EnsemblFungi" id="SPAC926.07c.1">
    <property type="protein sequence ID" value="SPAC926.07c.1:pep"/>
    <property type="gene ID" value="SPAC926.07c"/>
</dbReference>
<dbReference type="GeneID" id="2543530"/>
<dbReference type="KEGG" id="spo:2543530"/>
<dbReference type="PomBase" id="SPAC926.07c">
    <property type="gene designation" value="dlc2"/>
</dbReference>
<dbReference type="VEuPathDB" id="FungiDB:SPAC926.07c"/>
<dbReference type="eggNOG" id="KOG3430">
    <property type="taxonomic scope" value="Eukaryota"/>
</dbReference>
<dbReference type="HOGENOM" id="CLU_070944_4_0_1"/>
<dbReference type="InParanoid" id="Q9UR05"/>
<dbReference type="OMA" id="THEKGHF"/>
<dbReference type="PhylomeDB" id="Q9UR05"/>
<dbReference type="BRENDA" id="5.6.1.2">
    <property type="organism ID" value="5613"/>
</dbReference>
<dbReference type="Reactome" id="R-SPO-1632852">
    <property type="pathway name" value="Macroautophagy"/>
</dbReference>
<dbReference type="Reactome" id="R-SPO-6798695">
    <property type="pathway name" value="Neutrophil degranulation"/>
</dbReference>
<dbReference type="PRO" id="PR:Q9UR05"/>
<dbReference type="Proteomes" id="UP000002485">
    <property type="component" value="Chromosome I"/>
</dbReference>
<dbReference type="GO" id="GO:0005868">
    <property type="term" value="C:cytoplasmic dynein complex"/>
    <property type="evidence" value="ECO:0000318"/>
    <property type="project" value="GO_Central"/>
</dbReference>
<dbReference type="GO" id="GO:0005829">
    <property type="term" value="C:cytosol"/>
    <property type="evidence" value="ECO:0007005"/>
    <property type="project" value="PomBase"/>
</dbReference>
<dbReference type="GO" id="GO:0035974">
    <property type="term" value="C:meiotic spindle pole body"/>
    <property type="evidence" value="ECO:0000314"/>
    <property type="project" value="PomBase"/>
</dbReference>
<dbReference type="GO" id="GO:0005874">
    <property type="term" value="C:microtubule"/>
    <property type="evidence" value="ECO:0007669"/>
    <property type="project" value="UniProtKB-KW"/>
</dbReference>
<dbReference type="GO" id="GO:0034399">
    <property type="term" value="C:nuclear periphery"/>
    <property type="evidence" value="ECO:0000314"/>
    <property type="project" value="PomBase"/>
</dbReference>
<dbReference type="GO" id="GO:0005643">
    <property type="term" value="C:nuclear pore"/>
    <property type="evidence" value="ECO:0007669"/>
    <property type="project" value="UniProtKB-SubCell"/>
</dbReference>
<dbReference type="GO" id="GO:0005634">
    <property type="term" value="C:nucleus"/>
    <property type="evidence" value="ECO:0007005"/>
    <property type="project" value="PomBase"/>
</dbReference>
<dbReference type="GO" id="GO:0016887">
    <property type="term" value="F:ATP hydrolysis activity"/>
    <property type="evidence" value="ECO:0000305"/>
    <property type="project" value="PomBase"/>
</dbReference>
<dbReference type="GO" id="GO:0045505">
    <property type="term" value="F:dynein intermediate chain binding"/>
    <property type="evidence" value="ECO:0000318"/>
    <property type="project" value="GO_Central"/>
</dbReference>
<dbReference type="GO" id="GO:0030437">
    <property type="term" value="P:ascospore formation"/>
    <property type="evidence" value="ECO:0000305"/>
    <property type="project" value="PomBase"/>
</dbReference>
<dbReference type="GO" id="GO:0030989">
    <property type="term" value="P:dynein-driven meiotic oscillatory nuclear movement"/>
    <property type="evidence" value="ECO:0000305"/>
    <property type="project" value="PomBase"/>
</dbReference>
<dbReference type="GO" id="GO:0051028">
    <property type="term" value="P:mRNA transport"/>
    <property type="evidence" value="ECO:0007669"/>
    <property type="project" value="UniProtKB-KW"/>
</dbReference>
<dbReference type="GO" id="GO:0015031">
    <property type="term" value="P:protein transport"/>
    <property type="evidence" value="ECO:0007669"/>
    <property type="project" value="UniProtKB-KW"/>
</dbReference>
<dbReference type="CDD" id="cd21452">
    <property type="entry name" value="DLC-like_DYNLL1_DYNLL2"/>
    <property type="match status" value="1"/>
</dbReference>
<dbReference type="FunFam" id="3.30.740.10:FF:000001">
    <property type="entry name" value="Dynein light chain"/>
    <property type="match status" value="1"/>
</dbReference>
<dbReference type="Gene3D" id="3.30.740.10">
    <property type="entry name" value="Protein Inhibitor Of Neuronal Nitric Oxide Synthase"/>
    <property type="match status" value="1"/>
</dbReference>
<dbReference type="InterPro" id="IPR037177">
    <property type="entry name" value="DLC_sf"/>
</dbReference>
<dbReference type="InterPro" id="IPR019763">
    <property type="entry name" value="Dynein_light_1/2_CS"/>
</dbReference>
<dbReference type="InterPro" id="IPR001372">
    <property type="entry name" value="Dynein_light_chain_typ-1/2"/>
</dbReference>
<dbReference type="PANTHER" id="PTHR11886">
    <property type="entry name" value="DYNEIN LIGHT CHAIN"/>
    <property type="match status" value="1"/>
</dbReference>
<dbReference type="PANTHER" id="PTHR11886:SF35">
    <property type="entry name" value="DYNEIN LIGHT CHAIN"/>
    <property type="match status" value="1"/>
</dbReference>
<dbReference type="Pfam" id="PF01221">
    <property type="entry name" value="Dynein_light"/>
    <property type="match status" value="1"/>
</dbReference>
<dbReference type="SMART" id="SM01375">
    <property type="entry name" value="Dynein_light"/>
    <property type="match status" value="1"/>
</dbReference>
<dbReference type="SUPFAM" id="SSF54648">
    <property type="entry name" value="DLC"/>
    <property type="match status" value="1"/>
</dbReference>
<dbReference type="PROSITE" id="PS01239">
    <property type="entry name" value="DYNEIN_LIGHT_1"/>
    <property type="match status" value="1"/>
</dbReference>
<accession>Q9UR05</accession>
<evidence type="ECO:0000250" key="1"/>
<evidence type="ECO:0000250" key="2">
    <source>
        <dbReference type="UniProtKB" id="Q02647"/>
    </source>
</evidence>
<evidence type="ECO:0000305" key="3"/>
<sequence>MAVIKAVDMSEKMQQEAIHAAVQAMEKFTIEKDIAAFIKREFDKKFSPTWHCIVGRNFGSFVTHESRHFIYFYLGTVAFLLFKSG</sequence>
<gene>
    <name type="primary">dlc2</name>
    <name type="ORF">SPAC926.07c</name>
</gene>